<feature type="chain" id="PRO_0000258298" description="Phosphopentomutase">
    <location>
        <begin position="1"/>
        <end position="405"/>
    </location>
</feature>
<feature type="binding site" evidence="1">
    <location>
        <position position="10"/>
    </location>
    <ligand>
        <name>Mn(2+)</name>
        <dbReference type="ChEBI" id="CHEBI:29035"/>
        <label>1</label>
    </ligand>
</feature>
<feature type="binding site" evidence="1">
    <location>
        <position position="297"/>
    </location>
    <ligand>
        <name>Mn(2+)</name>
        <dbReference type="ChEBI" id="CHEBI:29035"/>
        <label>2</label>
    </ligand>
</feature>
<feature type="binding site" evidence="1">
    <location>
        <position position="302"/>
    </location>
    <ligand>
        <name>Mn(2+)</name>
        <dbReference type="ChEBI" id="CHEBI:29035"/>
        <label>2</label>
    </ligand>
</feature>
<feature type="binding site" evidence="1">
    <location>
        <position position="338"/>
    </location>
    <ligand>
        <name>Mn(2+)</name>
        <dbReference type="ChEBI" id="CHEBI:29035"/>
        <label>1</label>
    </ligand>
</feature>
<feature type="binding site" evidence="1">
    <location>
        <position position="339"/>
    </location>
    <ligand>
        <name>Mn(2+)</name>
        <dbReference type="ChEBI" id="CHEBI:29035"/>
        <label>1</label>
    </ligand>
</feature>
<feature type="binding site" evidence="1">
    <location>
        <position position="350"/>
    </location>
    <ligand>
        <name>Mn(2+)</name>
        <dbReference type="ChEBI" id="CHEBI:29035"/>
        <label>2</label>
    </ligand>
</feature>
<reference key="1">
    <citation type="journal article" date="2005" name="Genome Res.">
        <title>Coping with cold: the genome of the versatile marine Antarctica bacterium Pseudoalteromonas haloplanktis TAC125.</title>
        <authorList>
            <person name="Medigue C."/>
            <person name="Krin E."/>
            <person name="Pascal G."/>
            <person name="Barbe V."/>
            <person name="Bernsel A."/>
            <person name="Bertin P.N."/>
            <person name="Cheung F."/>
            <person name="Cruveiller S."/>
            <person name="D'Amico S."/>
            <person name="Duilio A."/>
            <person name="Fang G."/>
            <person name="Feller G."/>
            <person name="Ho C."/>
            <person name="Mangenot S."/>
            <person name="Marino G."/>
            <person name="Nilsson J."/>
            <person name="Parrilli E."/>
            <person name="Rocha E.P.C."/>
            <person name="Rouy Z."/>
            <person name="Sekowska A."/>
            <person name="Tutino M.L."/>
            <person name="Vallenet D."/>
            <person name="von Heijne G."/>
            <person name="Danchin A."/>
        </authorList>
    </citation>
    <scope>NUCLEOTIDE SEQUENCE [LARGE SCALE GENOMIC DNA]</scope>
    <source>
        <strain>TAC 125</strain>
    </source>
</reference>
<evidence type="ECO:0000255" key="1">
    <source>
        <dbReference type="HAMAP-Rule" id="MF_00740"/>
    </source>
</evidence>
<proteinExistence type="inferred from homology"/>
<dbReference type="EC" id="5.4.2.7" evidence="1"/>
<dbReference type="EMBL" id="CR954247">
    <property type="protein sequence ID" value="CAI89131.1"/>
    <property type="molecule type" value="Genomic_DNA"/>
</dbReference>
<dbReference type="SMR" id="Q3ICU9"/>
<dbReference type="STRING" id="326442.PSHAb0081"/>
<dbReference type="KEGG" id="pha:PSHAb0081"/>
<dbReference type="PATRIC" id="fig|326442.8.peg.2995"/>
<dbReference type="eggNOG" id="COG1015">
    <property type="taxonomic scope" value="Bacteria"/>
</dbReference>
<dbReference type="HOGENOM" id="CLU_053861_0_0_6"/>
<dbReference type="BioCyc" id="PHAL326442:PSHA_RS15260-MONOMER"/>
<dbReference type="UniPathway" id="UPA00002">
    <property type="reaction ID" value="UER00467"/>
</dbReference>
<dbReference type="Proteomes" id="UP000006843">
    <property type="component" value="Chromosome II"/>
</dbReference>
<dbReference type="GO" id="GO:0005829">
    <property type="term" value="C:cytosol"/>
    <property type="evidence" value="ECO:0007669"/>
    <property type="project" value="TreeGrafter"/>
</dbReference>
<dbReference type="GO" id="GO:0000287">
    <property type="term" value="F:magnesium ion binding"/>
    <property type="evidence" value="ECO:0007669"/>
    <property type="project" value="InterPro"/>
</dbReference>
<dbReference type="GO" id="GO:0030145">
    <property type="term" value="F:manganese ion binding"/>
    <property type="evidence" value="ECO:0007669"/>
    <property type="project" value="UniProtKB-UniRule"/>
</dbReference>
<dbReference type="GO" id="GO:0008973">
    <property type="term" value="F:phosphopentomutase activity"/>
    <property type="evidence" value="ECO:0007669"/>
    <property type="project" value="UniProtKB-UniRule"/>
</dbReference>
<dbReference type="GO" id="GO:0006018">
    <property type="term" value="P:2-deoxyribose 1-phosphate catabolic process"/>
    <property type="evidence" value="ECO:0007669"/>
    <property type="project" value="UniProtKB-UniRule"/>
</dbReference>
<dbReference type="GO" id="GO:0006015">
    <property type="term" value="P:5-phosphoribose 1-diphosphate biosynthetic process"/>
    <property type="evidence" value="ECO:0007669"/>
    <property type="project" value="UniProtKB-UniPathway"/>
</dbReference>
<dbReference type="GO" id="GO:0043094">
    <property type="term" value="P:metabolic compound salvage"/>
    <property type="evidence" value="ECO:0007669"/>
    <property type="project" value="InterPro"/>
</dbReference>
<dbReference type="GO" id="GO:0009117">
    <property type="term" value="P:nucleotide metabolic process"/>
    <property type="evidence" value="ECO:0007669"/>
    <property type="project" value="InterPro"/>
</dbReference>
<dbReference type="CDD" id="cd16009">
    <property type="entry name" value="PPM"/>
    <property type="match status" value="1"/>
</dbReference>
<dbReference type="FunFam" id="3.30.70.1250:FF:000001">
    <property type="entry name" value="Phosphopentomutase"/>
    <property type="match status" value="1"/>
</dbReference>
<dbReference type="Gene3D" id="3.40.720.10">
    <property type="entry name" value="Alkaline Phosphatase, subunit A"/>
    <property type="match status" value="1"/>
</dbReference>
<dbReference type="Gene3D" id="3.30.70.1250">
    <property type="entry name" value="Phosphopentomutase"/>
    <property type="match status" value="1"/>
</dbReference>
<dbReference type="HAMAP" id="MF_00740">
    <property type="entry name" value="Phosphopentomut"/>
    <property type="match status" value="1"/>
</dbReference>
<dbReference type="InterPro" id="IPR017850">
    <property type="entry name" value="Alkaline_phosphatase_core_sf"/>
</dbReference>
<dbReference type="InterPro" id="IPR010045">
    <property type="entry name" value="DeoB"/>
</dbReference>
<dbReference type="InterPro" id="IPR006124">
    <property type="entry name" value="Metalloenzyme"/>
</dbReference>
<dbReference type="InterPro" id="IPR024052">
    <property type="entry name" value="Phosphopentomutase_DeoB_cap_sf"/>
</dbReference>
<dbReference type="NCBIfam" id="TIGR01696">
    <property type="entry name" value="deoB"/>
    <property type="match status" value="1"/>
</dbReference>
<dbReference type="NCBIfam" id="NF003766">
    <property type="entry name" value="PRK05362.1"/>
    <property type="match status" value="1"/>
</dbReference>
<dbReference type="PANTHER" id="PTHR21110">
    <property type="entry name" value="PHOSPHOPENTOMUTASE"/>
    <property type="match status" value="1"/>
</dbReference>
<dbReference type="PANTHER" id="PTHR21110:SF0">
    <property type="entry name" value="PHOSPHOPENTOMUTASE"/>
    <property type="match status" value="1"/>
</dbReference>
<dbReference type="Pfam" id="PF01676">
    <property type="entry name" value="Metalloenzyme"/>
    <property type="match status" value="1"/>
</dbReference>
<dbReference type="PIRSF" id="PIRSF001491">
    <property type="entry name" value="Ppentomutase"/>
    <property type="match status" value="1"/>
</dbReference>
<dbReference type="SUPFAM" id="SSF53649">
    <property type="entry name" value="Alkaline phosphatase-like"/>
    <property type="match status" value="1"/>
</dbReference>
<dbReference type="SUPFAM" id="SSF143856">
    <property type="entry name" value="DeoB insert domain-like"/>
    <property type="match status" value="1"/>
</dbReference>
<name>DEOB_PSET1</name>
<gene>
    <name evidence="1" type="primary">deoB</name>
    <name type="ordered locus">PSHAb0081</name>
</gene>
<organism>
    <name type="scientific">Pseudoalteromonas translucida (strain TAC 125)</name>
    <dbReference type="NCBI Taxonomy" id="326442"/>
    <lineage>
        <taxon>Bacteria</taxon>
        <taxon>Pseudomonadati</taxon>
        <taxon>Pseudomonadota</taxon>
        <taxon>Gammaproteobacteria</taxon>
        <taxon>Alteromonadales</taxon>
        <taxon>Pseudoalteromonadaceae</taxon>
        <taxon>Pseudoalteromonas</taxon>
    </lineage>
</organism>
<keyword id="KW-0963">Cytoplasm</keyword>
<keyword id="KW-0413">Isomerase</keyword>
<keyword id="KW-0464">Manganese</keyword>
<keyword id="KW-0479">Metal-binding</keyword>
<keyword id="KW-1185">Reference proteome</keyword>
<sequence>MARAIILMADSLGIGAAPDADKFGDIGANTLAHLLKAYYDETGTALSLPNLSKLGLIDACEAAGKEPCLVSNRSASQGAWGYAKELSSGKDTPSGHWEMAGVPVLFDWGYFPKTQPSFPQEFIDELIARTGIPGILGNCHASGTTILEQLGEEHVKTGKPICYTSADSVFQIAAHEESFGLEKLYQVCETARSLLDEMNIGRVIARPFLGSNNQDFARTSNRRDYSVLPPAPTLLDVLAKDGGEVISIGKISDIYAHQGITQKHKAPGLINLLKKTNELMQSAPDHSLIFTNLVDFDEMFGHRRNPVGYAKALKEFDDYLPTILNALKADDLLIITADHGCDPTFPGSEHTREYVPVIAYQPGMTDIPLGERNSFADIGQTLAQWFNLPALEYGDGFIDKLTTSK</sequence>
<comment type="function">
    <text evidence="1">Isomerase that catalyzes the conversion of deoxy-ribose 1-phosphate (dRib-1-P) and ribose 1-phosphate (Rib-1-P) to deoxy-ribose 5-phosphate (dRib-5-P) and ribose 5-phosphate (Rib-5-P), respectively.</text>
</comment>
<comment type="catalytic activity">
    <reaction evidence="1">
        <text>2-deoxy-alpha-D-ribose 1-phosphate = 2-deoxy-D-ribose 5-phosphate</text>
        <dbReference type="Rhea" id="RHEA:27658"/>
        <dbReference type="ChEBI" id="CHEBI:57259"/>
        <dbReference type="ChEBI" id="CHEBI:62877"/>
        <dbReference type="EC" id="5.4.2.7"/>
    </reaction>
</comment>
<comment type="catalytic activity">
    <reaction evidence="1">
        <text>alpha-D-ribose 1-phosphate = D-ribose 5-phosphate</text>
        <dbReference type="Rhea" id="RHEA:18793"/>
        <dbReference type="ChEBI" id="CHEBI:57720"/>
        <dbReference type="ChEBI" id="CHEBI:78346"/>
        <dbReference type="EC" id="5.4.2.7"/>
    </reaction>
</comment>
<comment type="cofactor">
    <cofactor evidence="1">
        <name>Mn(2+)</name>
        <dbReference type="ChEBI" id="CHEBI:29035"/>
    </cofactor>
    <text evidence="1">Binds 2 manganese ions.</text>
</comment>
<comment type="pathway">
    <text evidence="1">Carbohydrate degradation; 2-deoxy-D-ribose 1-phosphate degradation; D-glyceraldehyde 3-phosphate and acetaldehyde from 2-deoxy-alpha-D-ribose 1-phosphate: step 1/2.</text>
</comment>
<comment type="subcellular location">
    <subcellularLocation>
        <location evidence="1">Cytoplasm</location>
    </subcellularLocation>
</comment>
<comment type="similarity">
    <text evidence="1">Belongs to the phosphopentomutase family.</text>
</comment>
<accession>Q3ICU9</accession>
<protein>
    <recommendedName>
        <fullName evidence="1">Phosphopentomutase</fullName>
        <ecNumber evidence="1">5.4.2.7</ecNumber>
    </recommendedName>
    <alternativeName>
        <fullName evidence="1">Phosphodeoxyribomutase</fullName>
    </alternativeName>
</protein>